<keyword id="KW-0012">Acyltransferase</keyword>
<keyword id="KW-0963">Cytoplasm</keyword>
<keyword id="KW-0441">Lipid A biosynthesis</keyword>
<keyword id="KW-0444">Lipid biosynthesis</keyword>
<keyword id="KW-0443">Lipid metabolism</keyword>
<keyword id="KW-1185">Reference proteome</keyword>
<keyword id="KW-0677">Repeat</keyword>
<keyword id="KW-0808">Transferase</keyword>
<protein>
    <recommendedName>
        <fullName evidence="1">Acyl-[acyl-carrier-protein]--UDP-N-acetylglucosamine O-acyltransferase</fullName>
        <shortName evidence="1">UDP-N-acetylglucosamine acyltransferase</shortName>
        <ecNumber evidence="1">2.3.1.129</ecNumber>
    </recommendedName>
</protein>
<gene>
    <name evidence="1" type="primary">lpxA</name>
    <name type="ordered locus">HAPS_1270</name>
</gene>
<name>LPXA_GLAP5</name>
<feature type="chain" id="PRO_1000134386" description="Acyl-[acyl-carrier-protein]--UDP-N-acetylglucosamine O-acyltransferase">
    <location>
        <begin position="1"/>
        <end position="264"/>
    </location>
</feature>
<evidence type="ECO:0000255" key="1">
    <source>
        <dbReference type="HAMAP-Rule" id="MF_00387"/>
    </source>
</evidence>
<dbReference type="EC" id="2.3.1.129" evidence="1"/>
<dbReference type="EMBL" id="CP001321">
    <property type="protein sequence ID" value="ACL32863.1"/>
    <property type="molecule type" value="Genomic_DNA"/>
</dbReference>
<dbReference type="RefSeq" id="WP_005711023.1">
    <property type="nucleotide sequence ID" value="NC_011852.1"/>
</dbReference>
<dbReference type="SMR" id="B8F6B1"/>
<dbReference type="STRING" id="557723.HAPS_1270"/>
<dbReference type="GeneID" id="66618232"/>
<dbReference type="KEGG" id="hap:HAPS_1270"/>
<dbReference type="HOGENOM" id="CLU_061249_0_0_6"/>
<dbReference type="UniPathway" id="UPA00359">
    <property type="reaction ID" value="UER00477"/>
</dbReference>
<dbReference type="Proteomes" id="UP000006743">
    <property type="component" value="Chromosome"/>
</dbReference>
<dbReference type="GO" id="GO:0005737">
    <property type="term" value="C:cytoplasm"/>
    <property type="evidence" value="ECO:0007669"/>
    <property type="project" value="UniProtKB-SubCell"/>
</dbReference>
<dbReference type="GO" id="GO:0016020">
    <property type="term" value="C:membrane"/>
    <property type="evidence" value="ECO:0007669"/>
    <property type="project" value="GOC"/>
</dbReference>
<dbReference type="GO" id="GO:0008780">
    <property type="term" value="F:acyl-[acyl-carrier-protein]-UDP-N-acetylglucosamine O-acyltransferase activity"/>
    <property type="evidence" value="ECO:0007669"/>
    <property type="project" value="UniProtKB-UniRule"/>
</dbReference>
<dbReference type="GO" id="GO:0009245">
    <property type="term" value="P:lipid A biosynthetic process"/>
    <property type="evidence" value="ECO:0007669"/>
    <property type="project" value="UniProtKB-UniRule"/>
</dbReference>
<dbReference type="CDD" id="cd03351">
    <property type="entry name" value="LbH_UDP-GlcNAc_AT"/>
    <property type="match status" value="1"/>
</dbReference>
<dbReference type="FunFam" id="2.160.10.10:FF:000003">
    <property type="entry name" value="Acyl-[acyl-carrier-protein]--UDP-N-acetylglucosamine O-acyltransferase"/>
    <property type="match status" value="1"/>
</dbReference>
<dbReference type="Gene3D" id="2.160.10.10">
    <property type="entry name" value="Hexapeptide repeat proteins"/>
    <property type="match status" value="1"/>
</dbReference>
<dbReference type="Gene3D" id="1.20.1180.10">
    <property type="entry name" value="Udp N-acetylglucosamine O-acyltransferase, C-terminal domain"/>
    <property type="match status" value="1"/>
</dbReference>
<dbReference type="HAMAP" id="MF_00387">
    <property type="entry name" value="LpxA"/>
    <property type="match status" value="1"/>
</dbReference>
<dbReference type="InterPro" id="IPR029098">
    <property type="entry name" value="Acetyltransf_C"/>
</dbReference>
<dbReference type="InterPro" id="IPR037157">
    <property type="entry name" value="Acetyltransf_C_sf"/>
</dbReference>
<dbReference type="InterPro" id="IPR001451">
    <property type="entry name" value="Hexapep"/>
</dbReference>
<dbReference type="InterPro" id="IPR018357">
    <property type="entry name" value="Hexapep_transf_CS"/>
</dbReference>
<dbReference type="InterPro" id="IPR010137">
    <property type="entry name" value="Lipid_A_LpxA"/>
</dbReference>
<dbReference type="InterPro" id="IPR011004">
    <property type="entry name" value="Trimer_LpxA-like_sf"/>
</dbReference>
<dbReference type="NCBIfam" id="TIGR01852">
    <property type="entry name" value="lipid_A_lpxA"/>
    <property type="match status" value="1"/>
</dbReference>
<dbReference type="NCBIfam" id="NF003657">
    <property type="entry name" value="PRK05289.1"/>
    <property type="match status" value="1"/>
</dbReference>
<dbReference type="PANTHER" id="PTHR43480">
    <property type="entry name" value="ACYL-[ACYL-CARRIER-PROTEIN]--UDP-N-ACETYLGLUCOSAMINE O-ACYLTRANSFERASE"/>
    <property type="match status" value="1"/>
</dbReference>
<dbReference type="PANTHER" id="PTHR43480:SF1">
    <property type="entry name" value="ACYL-[ACYL-CARRIER-PROTEIN]--UDP-N-ACETYLGLUCOSAMINE O-ACYLTRANSFERASE, MITOCHONDRIAL-RELATED"/>
    <property type="match status" value="1"/>
</dbReference>
<dbReference type="Pfam" id="PF13720">
    <property type="entry name" value="Acetyltransf_11"/>
    <property type="match status" value="1"/>
</dbReference>
<dbReference type="Pfam" id="PF00132">
    <property type="entry name" value="Hexapep"/>
    <property type="match status" value="2"/>
</dbReference>
<dbReference type="PIRSF" id="PIRSF000456">
    <property type="entry name" value="UDP-GlcNAc_acltr"/>
    <property type="match status" value="1"/>
</dbReference>
<dbReference type="SUPFAM" id="SSF51161">
    <property type="entry name" value="Trimeric LpxA-like enzymes"/>
    <property type="match status" value="1"/>
</dbReference>
<dbReference type="PROSITE" id="PS00101">
    <property type="entry name" value="HEXAPEP_TRANSFERASES"/>
    <property type="match status" value="2"/>
</dbReference>
<sequence>MPLIDASAKIHPTALIEEGAKIGANVEIGAFCVIGKDVRIGAGTKIHSHVVIQGDTEIGEDNQIFQFASIGEINQDLKYQGEPTKTIIGHRNRIRESVTIHRGTVQGGGVTRVGNDNLFMINCHIAHDCSIGNRCIIANNGTLAGHVTLDDFVIVGGMSAIHQFVVVGSHVMLGGGSMVSQDVPPYIMAQGNHAQPFGVNLEGLKRRGFEKATMHAIRNVYKLIYRSGKTLEEAIPEIEQYAKTEAAVSLFLDFFKRSTRGIIR</sequence>
<comment type="function">
    <text evidence="1">Involved in the biosynthesis of lipid A, a phosphorylated glycolipid that anchors the lipopolysaccharide to the outer membrane of the cell.</text>
</comment>
<comment type="catalytic activity">
    <reaction evidence="1">
        <text>a (3R)-hydroxyacyl-[ACP] + UDP-N-acetyl-alpha-D-glucosamine = a UDP-3-O-[(3R)-3-hydroxyacyl]-N-acetyl-alpha-D-glucosamine + holo-[ACP]</text>
        <dbReference type="Rhea" id="RHEA:67812"/>
        <dbReference type="Rhea" id="RHEA-COMP:9685"/>
        <dbReference type="Rhea" id="RHEA-COMP:9945"/>
        <dbReference type="ChEBI" id="CHEBI:57705"/>
        <dbReference type="ChEBI" id="CHEBI:64479"/>
        <dbReference type="ChEBI" id="CHEBI:78827"/>
        <dbReference type="ChEBI" id="CHEBI:173225"/>
        <dbReference type="EC" id="2.3.1.129"/>
    </reaction>
</comment>
<comment type="pathway">
    <text evidence="1">Glycolipid biosynthesis; lipid IV(A) biosynthesis; lipid IV(A) from (3R)-3-hydroxytetradecanoyl-[acyl-carrier-protein] and UDP-N-acetyl-alpha-D-glucosamine: step 1/6.</text>
</comment>
<comment type="subunit">
    <text evidence="1">Homotrimer.</text>
</comment>
<comment type="subcellular location">
    <subcellularLocation>
        <location evidence="1">Cytoplasm</location>
    </subcellularLocation>
</comment>
<comment type="similarity">
    <text evidence="1">Belongs to the transferase hexapeptide repeat family. LpxA subfamily.</text>
</comment>
<accession>B8F6B1</accession>
<reference key="1">
    <citation type="journal article" date="2009" name="J. Bacteriol.">
        <title>Complete genome sequence of Haemophilus parasuis SH0165.</title>
        <authorList>
            <person name="Yue M."/>
            <person name="Yang F."/>
            <person name="Yang J."/>
            <person name="Bei W."/>
            <person name="Cai X."/>
            <person name="Chen L."/>
            <person name="Dong J."/>
            <person name="Zhou R."/>
            <person name="Jin M."/>
            <person name="Jin Q."/>
            <person name="Chen H."/>
        </authorList>
    </citation>
    <scope>NUCLEOTIDE SEQUENCE [LARGE SCALE GENOMIC DNA]</scope>
    <source>
        <strain>SH0165</strain>
    </source>
</reference>
<organism>
    <name type="scientific">Glaesserella parasuis serovar 5 (strain SH0165)</name>
    <name type="common">Haemophilus parasuis</name>
    <dbReference type="NCBI Taxonomy" id="557723"/>
    <lineage>
        <taxon>Bacteria</taxon>
        <taxon>Pseudomonadati</taxon>
        <taxon>Pseudomonadota</taxon>
        <taxon>Gammaproteobacteria</taxon>
        <taxon>Pasteurellales</taxon>
        <taxon>Pasteurellaceae</taxon>
        <taxon>Glaesserella</taxon>
    </lineage>
</organism>
<proteinExistence type="inferred from homology"/>